<organism>
    <name type="scientific">Pongo abelii</name>
    <name type="common">Sumatran orangutan</name>
    <name type="synonym">Pongo pygmaeus abelii</name>
    <dbReference type="NCBI Taxonomy" id="9601"/>
    <lineage>
        <taxon>Eukaryota</taxon>
        <taxon>Metazoa</taxon>
        <taxon>Chordata</taxon>
        <taxon>Craniata</taxon>
        <taxon>Vertebrata</taxon>
        <taxon>Euteleostomi</taxon>
        <taxon>Mammalia</taxon>
        <taxon>Eutheria</taxon>
        <taxon>Euarchontoglires</taxon>
        <taxon>Primates</taxon>
        <taxon>Haplorrhini</taxon>
        <taxon>Catarrhini</taxon>
        <taxon>Hominidae</taxon>
        <taxon>Pongo</taxon>
    </lineage>
</organism>
<sequence>MPYPVGQTTGLVGLAVCNTPHERLRILYTKILDVLEEIPKNAAYRKYTEQITNEKLAMVKAEPDVKKLEDQLQGGQLEEVILQAEHELNLARKMKEWKLWEPLVEEPPADQWKWPI</sequence>
<reference key="1">
    <citation type="submission" date="2004-11" db="EMBL/GenBank/DDBJ databases">
        <authorList>
            <consortium name="The German cDNA consortium"/>
        </authorList>
    </citation>
    <scope>NUCLEOTIDE SEQUENCE [LARGE SCALE MRNA]</scope>
    <source>
        <tissue>Brain cortex</tissue>
    </source>
</reference>
<keyword id="KW-0007">Acetylation</keyword>
<keyword id="KW-0249">Electron transport</keyword>
<keyword id="KW-0472">Membrane</keyword>
<keyword id="KW-0496">Mitochondrion</keyword>
<keyword id="KW-0999">Mitochondrion inner membrane</keyword>
<keyword id="KW-1185">Reference proteome</keyword>
<keyword id="KW-0679">Respiratory chain</keyword>
<keyword id="KW-0813">Transport</keyword>
<accession>P0CB99</accession>
<accession>Q0MQA0</accession>
<accession>Q5RC95</accession>
<feature type="chain" id="PRO_0000250706" description="NADH dehydrogenase [ubiquinone] 1 alpha subcomplex subunit 5">
    <location>
        <begin position="1"/>
        <end position="116"/>
    </location>
</feature>
<feature type="modified residue" description="N6-acetyllysine" evidence="1">
    <location>
        <position position="30"/>
    </location>
</feature>
<feature type="modified residue" description="N6-acetyllysine" evidence="2">
    <location>
        <position position="46"/>
    </location>
</feature>
<feature type="modified residue" description="N6-acetyllysine" evidence="1">
    <location>
        <position position="60"/>
    </location>
</feature>
<feature type="modified residue" description="N6-acetyllysine; alternate" evidence="2">
    <location>
        <position position="98"/>
    </location>
</feature>
<feature type="modified residue" description="N6-succinyllysine; alternate" evidence="2">
    <location>
        <position position="98"/>
    </location>
</feature>
<name>NDUA5_PONAB</name>
<comment type="function">
    <text evidence="1">Accessory subunit of the mitochondrial membrane respiratory chain NADH dehydrogenase (Complex I), that is believed not to be involved in catalysis. Complex I functions in the transfer of electrons from NADH to the respiratory chain. The immediate electron acceptor for the enzyme is believed to be ubiquinone.</text>
</comment>
<comment type="subunit">
    <text evidence="1">Complex I is composed of 45 different subunits.</text>
</comment>
<comment type="subcellular location">
    <subcellularLocation>
        <location evidence="1">Mitochondrion inner membrane</location>
        <topology evidence="1">Peripheral membrane protein</topology>
        <orientation evidence="1">Matrix side</orientation>
    </subcellularLocation>
</comment>
<comment type="similarity">
    <text evidence="3">Belongs to the complex I NDUFA5 subunit family.</text>
</comment>
<gene>
    <name type="primary">NDUFA5</name>
</gene>
<protein>
    <recommendedName>
        <fullName>NADH dehydrogenase [ubiquinone] 1 alpha subcomplex subunit 5</fullName>
    </recommendedName>
    <alternativeName>
        <fullName>Complex I subunit B13</fullName>
    </alternativeName>
    <alternativeName>
        <fullName>Complex I-13kD-B</fullName>
        <shortName>CI-13kD-B</shortName>
    </alternativeName>
    <alternativeName>
        <fullName>NADH-ubiquinone oxidoreductase 13 kDa-B subunit</fullName>
    </alternativeName>
</protein>
<evidence type="ECO:0000250" key="1">
    <source>
        <dbReference type="UniProtKB" id="Q16718"/>
    </source>
</evidence>
<evidence type="ECO:0000250" key="2">
    <source>
        <dbReference type="UniProtKB" id="Q9CPP6"/>
    </source>
</evidence>
<evidence type="ECO:0000305" key="3"/>
<proteinExistence type="inferred from homology"/>
<dbReference type="EMBL" id="CR858385">
    <property type="protein sequence ID" value="CAH90612.1"/>
    <property type="molecule type" value="mRNA"/>
</dbReference>
<dbReference type="RefSeq" id="NP_001125332.1">
    <property type="nucleotide sequence ID" value="NM_001131860.1"/>
</dbReference>
<dbReference type="SMR" id="P0CB99"/>
<dbReference type="STRING" id="9601.ENSPPYP00000020141"/>
<dbReference type="GeneID" id="100172232"/>
<dbReference type="KEGG" id="pon:100172232"/>
<dbReference type="CTD" id="4698"/>
<dbReference type="eggNOG" id="KOG3365">
    <property type="taxonomic scope" value="Eukaryota"/>
</dbReference>
<dbReference type="InParanoid" id="P0CB99"/>
<dbReference type="OrthoDB" id="286811at2759"/>
<dbReference type="Proteomes" id="UP000001595">
    <property type="component" value="Unplaced"/>
</dbReference>
<dbReference type="GO" id="GO:0005743">
    <property type="term" value="C:mitochondrial inner membrane"/>
    <property type="evidence" value="ECO:0007669"/>
    <property type="project" value="UniProtKB-SubCell"/>
</dbReference>
<dbReference type="GO" id="GO:0045271">
    <property type="term" value="C:respiratory chain complex I"/>
    <property type="evidence" value="ECO:0000250"/>
    <property type="project" value="UniProtKB"/>
</dbReference>
<dbReference type="GO" id="GO:0022904">
    <property type="term" value="P:respiratory electron transport chain"/>
    <property type="evidence" value="ECO:0007669"/>
    <property type="project" value="InterPro"/>
</dbReference>
<dbReference type="InterPro" id="IPR006806">
    <property type="entry name" value="NDUFA5"/>
</dbReference>
<dbReference type="PANTHER" id="PTHR12653:SF0">
    <property type="entry name" value="NADH DEHYDROGENASE [UBIQUINONE] 1 ALPHA SUBCOMPLEX SUBUNIT 5"/>
    <property type="match status" value="1"/>
</dbReference>
<dbReference type="PANTHER" id="PTHR12653">
    <property type="entry name" value="NADH-UBIQUINONE OXIDOREDUCTASE 13 KD-B SUBUNIT"/>
    <property type="match status" value="1"/>
</dbReference>
<dbReference type="Pfam" id="PF04716">
    <property type="entry name" value="ETC_C1_NDUFA5"/>
    <property type="match status" value="1"/>
</dbReference>